<name>ARFJ_ARATH</name>
<comment type="function">
    <text evidence="5">Auxin response factors (ARFs) are transcriptional factors that bind specifically to the DNA sequence 5'-TGTCTC-3' found in the auxin-responsive promoter elements (AuxREs). Could act as transcriptional activator or repressor. Formation of heterodimers with Aux/IAA proteins may alter their ability to modulate early auxin response genes expression.</text>
</comment>
<comment type="subunit">
    <text evidence="1">Homodimers and heterodimers.</text>
</comment>
<comment type="interaction">
    <interactant intactId="EBI-3947482">
        <id>Q9SKN5</id>
    </interactant>
    <interactant intactId="EBI-3946408">
        <id>Q8H174</id>
        <label>IAA31</label>
    </interactant>
    <organismsDiffer>false</organismsDiffer>
    <experiments>3</experiments>
</comment>
<comment type="subcellular location">
    <subcellularLocation>
        <location>Nucleus</location>
    </subcellularLocation>
</comment>
<comment type="tissue specificity">
    <text evidence="4">Expressed in the whole plant.</text>
</comment>
<comment type="domain">
    <text>Interactions between auxin response factors (ARFs) and Aux/IAA proteins occur through their C-terminal dimerization domains III and IV.</text>
</comment>
<comment type="similarity">
    <text evidence="7">Belongs to the ARF family.</text>
</comment>
<comment type="sequence caution" evidence="7">
    <conflict type="frameshift">
        <sequence resource="EMBL-CDS" id="AAF04627"/>
    </conflict>
</comment>
<comment type="sequence caution" evidence="7">
    <conflict type="erroneous initiation">
        <sequence resource="EMBL-CDS" id="BAF00456"/>
    </conflict>
</comment>
<sequence length="693" mass="76721">MEQEKSLDPQLWHACAGSMVQIPSLNSTVFYFAQGHTEHAHAPPDFHAPRVPPLILCRVVSVKFLADAETDEVFAKITLLPLPGNDLDLENDAVLGLTPPSSDGNGNGKEKPASFAKTLTQSDANNGGGFSVPRYCAETIFPRLDYSAEPPVQTVIAKDIHGETWKFRHIYRGTPRRHLLTTGWSTFVNQKKLIAGDSIVFLRSESGDLCVGIRRAKRGGLGSNAGSDNPYPGFSGFLRDDESTTTTSKLMMMKRNGNNDGNAAATGRVRVEAVAEAVARAACGQAFEVVYYPRASTPEFCVKAADVRSAMRIRWCSGMRFKMAFETEDSSRISWFMGTVSAVQVADPIRWPNSPWRLLQVAWDEPDLLQNVKRVSPWLVELVSNMPTIHLSPFSPRKKIRIPQPFEFPFHGTKFPIFSPGFANNGGGESMCYLSNDNNNAPAGIQGARQAQQLFGSPSPSLLSDLNLSSYTGNNKLHSPAMFLSSFNPRHHHYQARDSENSNNISCSLTMGNPAMVQDKKKSVGSVKTHQFVLFGQPILTEQQVMNRKRFLEEEAEAEEEKGLVARGLTWNYSLQGLETGHCKVFMESEDVGRTLDLSVIGSYQELYRKLAEMFHIEERSDLLTHVVYRDANGVIKRIGDEPFSDFMKATKRLTIKMDIGGDNVRKTWITGIRTGENGIDASTKTGPLSIFA</sequence>
<organism>
    <name type="scientific">Arabidopsis thaliana</name>
    <name type="common">Mouse-ear cress</name>
    <dbReference type="NCBI Taxonomy" id="3702"/>
    <lineage>
        <taxon>Eukaryota</taxon>
        <taxon>Viridiplantae</taxon>
        <taxon>Streptophyta</taxon>
        <taxon>Embryophyta</taxon>
        <taxon>Tracheophyta</taxon>
        <taxon>Spermatophyta</taxon>
        <taxon>Magnoliopsida</taxon>
        <taxon>eudicotyledons</taxon>
        <taxon>Gunneridae</taxon>
        <taxon>Pentapetalae</taxon>
        <taxon>rosids</taxon>
        <taxon>malvids</taxon>
        <taxon>Brassicales</taxon>
        <taxon>Brassicaceae</taxon>
        <taxon>Camelineae</taxon>
        <taxon>Arabidopsis</taxon>
    </lineage>
</organism>
<keyword id="KW-0927">Auxin signaling pathway</keyword>
<keyword id="KW-0238">DNA-binding</keyword>
<keyword id="KW-0539">Nucleus</keyword>
<keyword id="KW-1185">Reference proteome</keyword>
<keyword id="KW-0804">Transcription</keyword>
<keyword id="KW-0805">Transcription regulation</keyword>
<dbReference type="EMBL" id="AF099735">
    <property type="protein sequence ID" value="AAF04627.1"/>
    <property type="status" value="ALT_FRAME"/>
    <property type="molecule type" value="mRNA"/>
</dbReference>
<dbReference type="EMBL" id="AC006283">
    <property type="protein sequence ID" value="AAD20695.1"/>
    <property type="molecule type" value="Genomic_DNA"/>
</dbReference>
<dbReference type="EMBL" id="CP002685">
    <property type="protein sequence ID" value="AEC08110.1"/>
    <property type="molecule type" value="Genomic_DNA"/>
</dbReference>
<dbReference type="EMBL" id="AF325073">
    <property type="protein sequence ID" value="AAK17141.1"/>
    <property type="molecule type" value="mRNA"/>
</dbReference>
<dbReference type="EMBL" id="AF336919">
    <property type="protein sequence ID" value="AAG54000.1"/>
    <property type="molecule type" value="mRNA"/>
</dbReference>
<dbReference type="EMBL" id="EU550097">
    <property type="protein sequence ID" value="ACB30883.1"/>
    <property type="molecule type" value="Genomic_DNA"/>
</dbReference>
<dbReference type="EMBL" id="EU550098">
    <property type="protein sequence ID" value="ACB30884.1"/>
    <property type="molecule type" value="Genomic_DNA"/>
</dbReference>
<dbReference type="EMBL" id="EU550099">
    <property type="protein sequence ID" value="ACB30885.1"/>
    <property type="molecule type" value="Genomic_DNA"/>
</dbReference>
<dbReference type="EMBL" id="EU550100">
    <property type="protein sequence ID" value="ACB30886.1"/>
    <property type="molecule type" value="Genomic_DNA"/>
</dbReference>
<dbReference type="EMBL" id="EU550101">
    <property type="protein sequence ID" value="ACB30887.1"/>
    <property type="molecule type" value="Genomic_DNA"/>
</dbReference>
<dbReference type="EMBL" id="EU550102">
    <property type="protein sequence ID" value="ACB30888.1"/>
    <property type="molecule type" value="Genomic_DNA"/>
</dbReference>
<dbReference type="EMBL" id="EU550103">
    <property type="protein sequence ID" value="ACB30889.1"/>
    <property type="molecule type" value="Genomic_DNA"/>
</dbReference>
<dbReference type="EMBL" id="EU550104">
    <property type="protein sequence ID" value="ACB30890.1"/>
    <property type="molecule type" value="Genomic_DNA"/>
</dbReference>
<dbReference type="EMBL" id="EU550105">
    <property type="protein sequence ID" value="ACB30891.1"/>
    <property type="molecule type" value="Genomic_DNA"/>
</dbReference>
<dbReference type="EMBL" id="EU550106">
    <property type="protein sequence ID" value="ACB30892.1"/>
    <property type="molecule type" value="Genomic_DNA"/>
</dbReference>
<dbReference type="EMBL" id="EU550107">
    <property type="protein sequence ID" value="ACB30893.1"/>
    <property type="molecule type" value="Genomic_DNA"/>
</dbReference>
<dbReference type="EMBL" id="EU550108">
    <property type="protein sequence ID" value="ACB30894.1"/>
    <property type="molecule type" value="Genomic_DNA"/>
</dbReference>
<dbReference type="EMBL" id="EU550109">
    <property type="protein sequence ID" value="ACB30895.1"/>
    <property type="molecule type" value="Genomic_DNA"/>
</dbReference>
<dbReference type="EMBL" id="EU550110">
    <property type="protein sequence ID" value="ACB30896.1"/>
    <property type="molecule type" value="Genomic_DNA"/>
</dbReference>
<dbReference type="EMBL" id="EU550111">
    <property type="protein sequence ID" value="ACB30897.1"/>
    <property type="molecule type" value="Genomic_DNA"/>
</dbReference>
<dbReference type="EMBL" id="EU550112">
    <property type="protein sequence ID" value="ACB30898.1"/>
    <property type="molecule type" value="Genomic_DNA"/>
</dbReference>
<dbReference type="EMBL" id="EU550113">
    <property type="protein sequence ID" value="ACB30899.1"/>
    <property type="molecule type" value="Genomic_DNA"/>
</dbReference>
<dbReference type="EMBL" id="EU550114">
    <property type="protein sequence ID" value="ACB30900.1"/>
    <property type="molecule type" value="Genomic_DNA"/>
</dbReference>
<dbReference type="EMBL" id="EU550115">
    <property type="protein sequence ID" value="ACB30901.1"/>
    <property type="molecule type" value="Genomic_DNA"/>
</dbReference>
<dbReference type="EMBL" id="EU550116">
    <property type="protein sequence ID" value="ACB30902.1"/>
    <property type="molecule type" value="Genomic_DNA"/>
</dbReference>
<dbReference type="EMBL" id="EU550117">
    <property type="protein sequence ID" value="ACB30903.1"/>
    <property type="molecule type" value="Genomic_DNA"/>
</dbReference>
<dbReference type="EMBL" id="EU550118">
    <property type="protein sequence ID" value="ACB30904.1"/>
    <property type="molecule type" value="Genomic_DNA"/>
</dbReference>
<dbReference type="EMBL" id="EU550119">
    <property type="protein sequence ID" value="ACB30905.1"/>
    <property type="molecule type" value="Genomic_DNA"/>
</dbReference>
<dbReference type="EMBL" id="AK228534">
    <property type="protein sequence ID" value="BAF00456.1"/>
    <property type="status" value="ALT_INIT"/>
    <property type="molecule type" value="mRNA"/>
</dbReference>
<dbReference type="PIR" id="G84683">
    <property type="entry name" value="G84683"/>
</dbReference>
<dbReference type="RefSeq" id="NP_180402.1">
    <property type="nucleotide sequence ID" value="NM_128394.5"/>
</dbReference>
<dbReference type="SMR" id="Q9SKN5"/>
<dbReference type="BioGRID" id="2732">
    <property type="interactions" value="10"/>
</dbReference>
<dbReference type="FunCoup" id="Q9SKN5">
    <property type="interactions" value="238"/>
</dbReference>
<dbReference type="IntAct" id="Q9SKN5">
    <property type="interactions" value="15"/>
</dbReference>
<dbReference type="STRING" id="3702.Q9SKN5"/>
<dbReference type="PaxDb" id="3702-AT2G28350.1"/>
<dbReference type="ProteomicsDB" id="224558"/>
<dbReference type="EnsemblPlants" id="AT2G28350.1">
    <property type="protein sequence ID" value="AT2G28350.1"/>
    <property type="gene ID" value="AT2G28350"/>
</dbReference>
<dbReference type="GeneID" id="817382"/>
<dbReference type="Gramene" id="AT2G28350.1">
    <property type="protein sequence ID" value="AT2G28350.1"/>
    <property type="gene ID" value="AT2G28350"/>
</dbReference>
<dbReference type="KEGG" id="ath:AT2G28350"/>
<dbReference type="Araport" id="AT2G28350"/>
<dbReference type="TAIR" id="AT2G28350">
    <property type="gene designation" value="ARF10"/>
</dbReference>
<dbReference type="eggNOG" id="ENOG502QQ5I">
    <property type="taxonomic scope" value="Eukaryota"/>
</dbReference>
<dbReference type="HOGENOM" id="CLU_002626_3_5_1"/>
<dbReference type="InParanoid" id="Q9SKN5"/>
<dbReference type="PhylomeDB" id="Q9SKN5"/>
<dbReference type="PRO" id="PR:Q9SKN5"/>
<dbReference type="Proteomes" id="UP000006548">
    <property type="component" value="Chromosome 2"/>
</dbReference>
<dbReference type="ExpressionAtlas" id="Q9SKN5">
    <property type="expression patterns" value="baseline and differential"/>
</dbReference>
<dbReference type="GO" id="GO:0005634">
    <property type="term" value="C:nucleus"/>
    <property type="evidence" value="ECO:0007669"/>
    <property type="project" value="UniProtKB-SubCell"/>
</dbReference>
<dbReference type="GO" id="GO:0003677">
    <property type="term" value="F:DNA binding"/>
    <property type="evidence" value="ECO:0007669"/>
    <property type="project" value="UniProtKB-KW"/>
</dbReference>
<dbReference type="GO" id="GO:0003700">
    <property type="term" value="F:DNA-binding transcription factor activity"/>
    <property type="evidence" value="ECO:0000250"/>
    <property type="project" value="TAIR"/>
</dbReference>
<dbReference type="GO" id="GO:0035198">
    <property type="term" value="F:miRNA binding"/>
    <property type="evidence" value="ECO:0000250"/>
    <property type="project" value="TAIR"/>
</dbReference>
<dbReference type="GO" id="GO:0009738">
    <property type="term" value="P:abscisic acid-activated signaling pathway"/>
    <property type="evidence" value="ECO:0000315"/>
    <property type="project" value="TAIR"/>
</dbReference>
<dbReference type="GO" id="GO:0009734">
    <property type="term" value="P:auxin-activated signaling pathway"/>
    <property type="evidence" value="ECO:0000315"/>
    <property type="project" value="TAIR"/>
</dbReference>
<dbReference type="GO" id="GO:0051301">
    <property type="term" value="P:cell division"/>
    <property type="evidence" value="ECO:0000316"/>
    <property type="project" value="TAIR"/>
</dbReference>
<dbReference type="GO" id="GO:0048589">
    <property type="term" value="P:developmental growth"/>
    <property type="evidence" value="ECO:0000315"/>
    <property type="project" value="TAIR"/>
</dbReference>
<dbReference type="GO" id="GO:0010154">
    <property type="term" value="P:fruit development"/>
    <property type="evidence" value="ECO:0000315"/>
    <property type="project" value="TAIR"/>
</dbReference>
<dbReference type="GO" id="GO:0048366">
    <property type="term" value="P:leaf development"/>
    <property type="evidence" value="ECO:0000315"/>
    <property type="project" value="TAIR"/>
</dbReference>
<dbReference type="GO" id="GO:0007389">
    <property type="term" value="P:pattern specification process"/>
    <property type="evidence" value="ECO:0000314"/>
    <property type="project" value="TAIR"/>
</dbReference>
<dbReference type="GO" id="GO:0048441">
    <property type="term" value="P:petal development"/>
    <property type="evidence" value="ECO:0000315"/>
    <property type="project" value="TAIR"/>
</dbReference>
<dbReference type="GO" id="GO:0031540">
    <property type="term" value="P:regulation of anthocyanin biosynthetic process"/>
    <property type="evidence" value="ECO:0000315"/>
    <property type="project" value="TAIR"/>
</dbReference>
<dbReference type="GO" id="GO:0009743">
    <property type="term" value="P:response to carbohydrate"/>
    <property type="evidence" value="ECO:0000315"/>
    <property type="project" value="TAIR"/>
</dbReference>
<dbReference type="GO" id="GO:0048829">
    <property type="term" value="P:root cap development"/>
    <property type="evidence" value="ECO:0000315"/>
    <property type="project" value="TAIR"/>
</dbReference>
<dbReference type="GO" id="GO:0048442">
    <property type="term" value="P:sepal development"/>
    <property type="evidence" value="ECO:0000315"/>
    <property type="project" value="TAIR"/>
</dbReference>
<dbReference type="CDD" id="cd10017">
    <property type="entry name" value="B3_DNA"/>
    <property type="match status" value="1"/>
</dbReference>
<dbReference type="FunFam" id="2.30.30.1040:FF:000002">
    <property type="entry name" value="Auxin response factor"/>
    <property type="match status" value="1"/>
</dbReference>
<dbReference type="FunFam" id="2.40.330.10:FF:000001">
    <property type="entry name" value="Auxin response factor"/>
    <property type="match status" value="1"/>
</dbReference>
<dbReference type="FunFam" id="3.10.20.90:FF:000261">
    <property type="entry name" value="Auxin response factor"/>
    <property type="match status" value="1"/>
</dbReference>
<dbReference type="Gene3D" id="2.30.30.1040">
    <property type="match status" value="1"/>
</dbReference>
<dbReference type="Gene3D" id="2.40.330.10">
    <property type="entry name" value="DNA-binding pseudobarrel domain"/>
    <property type="match status" value="1"/>
</dbReference>
<dbReference type="Gene3D" id="3.10.20.90">
    <property type="entry name" value="Phosphatidylinositol 3-kinase Catalytic Subunit, Chain A, domain 1"/>
    <property type="match status" value="1"/>
</dbReference>
<dbReference type="InterPro" id="IPR010525">
    <property type="entry name" value="ARF_dom"/>
</dbReference>
<dbReference type="InterPro" id="IPR044835">
    <property type="entry name" value="ARF_plant"/>
</dbReference>
<dbReference type="InterPro" id="IPR003340">
    <property type="entry name" value="B3_DNA-bd"/>
</dbReference>
<dbReference type="InterPro" id="IPR015300">
    <property type="entry name" value="DNA-bd_pseudobarrel_sf"/>
</dbReference>
<dbReference type="InterPro" id="IPR053793">
    <property type="entry name" value="PB1-like"/>
</dbReference>
<dbReference type="PANTHER" id="PTHR31384:SF193">
    <property type="entry name" value="AUXIN RESPONSE FACTOR 10"/>
    <property type="match status" value="1"/>
</dbReference>
<dbReference type="PANTHER" id="PTHR31384">
    <property type="entry name" value="AUXIN RESPONSE FACTOR 4-RELATED"/>
    <property type="match status" value="1"/>
</dbReference>
<dbReference type="Pfam" id="PF06507">
    <property type="entry name" value="ARF_AD"/>
    <property type="match status" value="1"/>
</dbReference>
<dbReference type="Pfam" id="PF02362">
    <property type="entry name" value="B3"/>
    <property type="match status" value="1"/>
</dbReference>
<dbReference type="SMART" id="SM01019">
    <property type="entry name" value="B3"/>
    <property type="match status" value="1"/>
</dbReference>
<dbReference type="SUPFAM" id="SSF101936">
    <property type="entry name" value="DNA-binding pseudobarrel domain"/>
    <property type="match status" value="1"/>
</dbReference>
<dbReference type="PROSITE" id="PS50863">
    <property type="entry name" value="B3"/>
    <property type="match status" value="1"/>
</dbReference>
<dbReference type="PROSITE" id="PS51745">
    <property type="entry name" value="PB1"/>
    <property type="match status" value="1"/>
</dbReference>
<proteinExistence type="evidence at protein level"/>
<evidence type="ECO:0000250" key="1"/>
<evidence type="ECO:0000255" key="2">
    <source>
        <dbReference type="PROSITE-ProRule" id="PRU00326"/>
    </source>
</evidence>
<evidence type="ECO:0000255" key="3">
    <source>
        <dbReference type="PROSITE-ProRule" id="PRU01081"/>
    </source>
</evidence>
<evidence type="ECO:0000269" key="4">
    <source>
    </source>
</evidence>
<evidence type="ECO:0000269" key="5">
    <source>
    </source>
</evidence>
<evidence type="ECO:0000269" key="6">
    <source>
    </source>
</evidence>
<evidence type="ECO:0000305" key="7"/>
<accession>Q9SKN5</accession>
<accession>B2CTC0</accession>
<accession>B2CTC4</accession>
<accession>B2CTD5</accession>
<accession>B2CTE0</accession>
<accession>Q0WQZ3</accession>
<accession>Q9SQ86</accession>
<reference key="1">
    <citation type="journal article" date="1999" name="Plant J.">
        <title>Dimerization and DNA binding of auxin response factors.</title>
        <authorList>
            <person name="Ulmasov T."/>
            <person name="Hagen G."/>
            <person name="Guilfoyle T.J."/>
        </authorList>
    </citation>
    <scope>NUCLEOTIDE SEQUENCE [MRNA]</scope>
    <scope>DIMERIZATION</scope>
    <scope>TISSUE SPECIFICITY</scope>
    <source>
        <strain>cv. Columbia</strain>
    </source>
</reference>
<reference key="2">
    <citation type="journal article" date="1999" name="Nature">
        <title>Sequence and analysis of chromosome 2 of the plant Arabidopsis thaliana.</title>
        <authorList>
            <person name="Lin X."/>
            <person name="Kaul S."/>
            <person name="Rounsley S.D."/>
            <person name="Shea T.P."/>
            <person name="Benito M.-I."/>
            <person name="Town C.D."/>
            <person name="Fujii C.Y."/>
            <person name="Mason T.M."/>
            <person name="Bowman C.L."/>
            <person name="Barnstead M.E."/>
            <person name="Feldblyum T.V."/>
            <person name="Buell C.R."/>
            <person name="Ketchum K.A."/>
            <person name="Lee J.J."/>
            <person name="Ronning C.M."/>
            <person name="Koo H.L."/>
            <person name="Moffat K.S."/>
            <person name="Cronin L.A."/>
            <person name="Shen M."/>
            <person name="Pai G."/>
            <person name="Van Aken S."/>
            <person name="Umayam L."/>
            <person name="Tallon L.J."/>
            <person name="Gill J.E."/>
            <person name="Adams M.D."/>
            <person name="Carrera A.J."/>
            <person name="Creasy T.H."/>
            <person name="Goodman H.M."/>
            <person name="Somerville C.R."/>
            <person name="Copenhaver G.P."/>
            <person name="Preuss D."/>
            <person name="Nierman W.C."/>
            <person name="White O."/>
            <person name="Eisen J.A."/>
            <person name="Salzberg S.L."/>
            <person name="Fraser C.M."/>
            <person name="Venter J.C."/>
        </authorList>
    </citation>
    <scope>NUCLEOTIDE SEQUENCE [LARGE SCALE GENOMIC DNA]</scope>
    <source>
        <strain>cv. Columbia</strain>
    </source>
</reference>
<reference key="3">
    <citation type="journal article" date="2017" name="Plant J.">
        <title>Araport11: a complete reannotation of the Arabidopsis thaliana reference genome.</title>
        <authorList>
            <person name="Cheng C.Y."/>
            <person name="Krishnakumar V."/>
            <person name="Chan A.P."/>
            <person name="Thibaud-Nissen F."/>
            <person name="Schobel S."/>
            <person name="Town C.D."/>
        </authorList>
    </citation>
    <scope>GENOME REANNOTATION</scope>
    <source>
        <strain>cv. Columbia</strain>
    </source>
</reference>
<reference key="4">
    <citation type="journal article" date="2003" name="Science">
        <title>Empirical analysis of transcriptional activity in the Arabidopsis genome.</title>
        <authorList>
            <person name="Yamada K."/>
            <person name="Lim J."/>
            <person name="Dale J.M."/>
            <person name="Chen H."/>
            <person name="Shinn P."/>
            <person name="Palm C.J."/>
            <person name="Southwick A.M."/>
            <person name="Wu H.C."/>
            <person name="Kim C.J."/>
            <person name="Nguyen M."/>
            <person name="Pham P.K."/>
            <person name="Cheuk R.F."/>
            <person name="Karlin-Newmann G."/>
            <person name="Liu S.X."/>
            <person name="Lam B."/>
            <person name="Sakano H."/>
            <person name="Wu T."/>
            <person name="Yu G."/>
            <person name="Miranda M."/>
            <person name="Quach H.L."/>
            <person name="Tripp M."/>
            <person name="Chang C.H."/>
            <person name="Lee J.M."/>
            <person name="Toriumi M.J."/>
            <person name="Chan M.M."/>
            <person name="Tang C.C."/>
            <person name="Onodera C.S."/>
            <person name="Deng J.M."/>
            <person name="Akiyama K."/>
            <person name="Ansari Y."/>
            <person name="Arakawa T."/>
            <person name="Banh J."/>
            <person name="Banno F."/>
            <person name="Bowser L."/>
            <person name="Brooks S.Y."/>
            <person name="Carninci P."/>
            <person name="Chao Q."/>
            <person name="Choy N."/>
            <person name="Enju A."/>
            <person name="Goldsmith A.D."/>
            <person name="Gurjal M."/>
            <person name="Hansen N.F."/>
            <person name="Hayashizaki Y."/>
            <person name="Johnson-Hopson C."/>
            <person name="Hsuan V.W."/>
            <person name="Iida K."/>
            <person name="Karnes M."/>
            <person name="Khan S."/>
            <person name="Koesema E."/>
            <person name="Ishida J."/>
            <person name="Jiang P.X."/>
            <person name="Jones T."/>
            <person name="Kawai J."/>
            <person name="Kamiya A."/>
            <person name="Meyers C."/>
            <person name="Nakajima M."/>
            <person name="Narusaka M."/>
            <person name="Seki M."/>
            <person name="Sakurai T."/>
            <person name="Satou M."/>
            <person name="Tamse R."/>
            <person name="Vaysberg M."/>
            <person name="Wallender E.K."/>
            <person name="Wong C."/>
            <person name="Yamamura Y."/>
            <person name="Yuan S."/>
            <person name="Shinozaki K."/>
            <person name="Davis R.W."/>
            <person name="Theologis A."/>
            <person name="Ecker J.R."/>
        </authorList>
    </citation>
    <scope>NUCLEOTIDE SEQUENCE [LARGE SCALE MRNA]</scope>
    <source>
        <strain>cv. Columbia</strain>
    </source>
</reference>
<reference key="5">
    <citation type="journal article" date="2008" name="Plant Physiol.">
        <title>Sequence variation of microRNAs and their binding sites in Arabidopsis.</title>
        <authorList>
            <person name="Ehrenreich I.M."/>
            <person name="Purugganan M.D."/>
        </authorList>
    </citation>
    <scope>NUCLEOTIDE SEQUENCE [GENOMIC DNA] OF 365-526</scope>
    <scope>VARIANTS ASP-411; SER-473 AND ASN-475 DEL</scope>
    <source>
        <strain>cv. Ag-0</strain>
        <strain>cv. An-1</strain>
        <strain>cv. Bay-0</strain>
        <strain>cv. Br-0</strain>
        <strain>cv. C24</strain>
        <strain>cv. Ct-1</strain>
        <strain>cv. Cvi-1</strain>
        <strain>cv. Edi-0</strain>
        <strain>cv. Ei-2</strain>
        <strain>cv. Ga-0</strain>
        <strain>cv. Gy-0</strain>
        <strain>cv. Kas-2</strain>
        <strain>cv. Ll-0</strain>
        <strain>cv. Mrk-0</strain>
        <strain>cv. Ms-0</strain>
        <strain>cv. Mt-0</strain>
        <strain>cv. Nd-1</strain>
        <strain>cv. Nok-3</strain>
        <strain>cv. Oy-0</strain>
        <strain>cv. Sorbo</strain>
        <strain>cv. Wassilewskija</strain>
        <strain>cv. Wei-0</strain>
        <strain>cv. Wt-5</strain>
    </source>
</reference>
<reference key="6">
    <citation type="submission" date="2006-07" db="EMBL/GenBank/DDBJ databases">
        <title>Large-scale analysis of RIKEN Arabidopsis full-length (RAFL) cDNAs.</title>
        <authorList>
            <person name="Totoki Y."/>
            <person name="Seki M."/>
            <person name="Ishida J."/>
            <person name="Nakajima M."/>
            <person name="Enju A."/>
            <person name="Kamiya A."/>
            <person name="Narusaka M."/>
            <person name="Shin-i T."/>
            <person name="Nakagawa M."/>
            <person name="Sakamoto N."/>
            <person name="Oishi K."/>
            <person name="Kohara Y."/>
            <person name="Kobayashi M."/>
            <person name="Toyoda A."/>
            <person name="Sakaki Y."/>
            <person name="Sakurai T."/>
            <person name="Iida K."/>
            <person name="Akiyama K."/>
            <person name="Satou M."/>
            <person name="Toyoda T."/>
            <person name="Konagaya A."/>
            <person name="Carninci P."/>
            <person name="Kawai J."/>
            <person name="Hayashizaki Y."/>
            <person name="Shinozaki K."/>
        </authorList>
    </citation>
    <scope>NUCLEOTIDE SEQUENCE [LARGE SCALE MRNA] OF 448-693</scope>
    <source>
        <strain>cv. Columbia</strain>
    </source>
</reference>
<reference key="7">
    <citation type="journal article" date="2002" name="Plant Mol. Biol.">
        <title>Auxin-responsive gene expression: genes, promoters and regulatory factors.</title>
        <authorList>
            <person name="Hagen G."/>
            <person name="Guilfoyle T.J."/>
        </authorList>
    </citation>
    <scope>GENE FAMILY</scope>
    <scope>NOMENCLATURE</scope>
    <scope>FUNCTION</scope>
</reference>
<reference key="8">
    <citation type="journal article" date="2008" name="Trends Plant Sci.">
        <title>The plant B3 superfamily.</title>
        <authorList>
            <person name="Swaminathan K."/>
            <person name="Peterson K."/>
            <person name="Jack T."/>
        </authorList>
    </citation>
    <scope>GENE FAMILY</scope>
</reference>
<feature type="chain" id="PRO_0000111514" description="Auxin response factor 10">
    <location>
        <begin position="1"/>
        <end position="693"/>
    </location>
</feature>
<feature type="domain" description="PB1" evidence="3">
    <location>
        <begin position="580"/>
        <end position="668"/>
    </location>
</feature>
<feature type="DNA-binding region" description="TF-B3" evidence="2">
    <location>
        <begin position="115"/>
        <end position="217"/>
    </location>
</feature>
<feature type="sequence variant" description="In strain: cv. Ag-0, cv. Bay-0, cv. Br-0, cv. C24, cv. Ct-1, cv. CVi-0, cv. Edi-0, cv. Ei-2, cv. Ga-0, cv. Gy-0, cv. Kas-2, cv. Ll-0, cv. Mrk-0, cv. Ms-0, cv. Mt-0, cv. Nd-1, cv. Nok-3, cv. Oy-0, cv. Sorbo, cv. Wassilewskija, cv. Wei-0 and cv. Wt-5." evidence="6">
    <original>H</original>
    <variation>D</variation>
    <location>
        <position position="411"/>
    </location>
</feature>
<feature type="sequence variant" description="In strain: cv. Nd-1." evidence="6">
    <original>G</original>
    <variation>S</variation>
    <location>
        <position position="473"/>
    </location>
</feature>
<feature type="sequence variant" description="In strain: cv. Bay-0, cv. Ga-0, cv. Ms-0 and cv. Oy-0." evidence="6">
    <location>
        <position position="475"/>
    </location>
</feature>
<feature type="sequence conflict" description="In Ref. 1; AAF04627." evidence="7" ref="1">
    <original>I</original>
    <variation>N</variation>
    <location>
        <position position="156"/>
    </location>
</feature>
<feature type="sequence conflict" description="In Ref. 1; AAF04627." evidence="7" ref="1">
    <original>R</original>
    <variation>W</variation>
    <location>
        <position position="397"/>
    </location>
</feature>
<feature type="sequence conflict" description="In Ref. 6; BAF00456." evidence="7" ref="6">
    <original>V</original>
    <variation>I</variation>
    <location>
        <position position="585"/>
    </location>
</feature>
<feature type="sequence conflict" description="In Ref. 1; AAF04627." evidence="7" ref="1">
    <original>Y</original>
    <variation>V</variation>
    <location>
        <position position="604"/>
    </location>
</feature>
<feature type="sequence conflict" description="In Ref. 6; BAF00456." evidence="7" ref="6">
    <original>R</original>
    <variation>G</variation>
    <location>
        <position position="620"/>
    </location>
</feature>
<feature type="sequence conflict" description="In Ref. 1; AAF04627." evidence="7" ref="1">
    <original>S</original>
    <variation>P</variation>
    <location>
        <position position="621"/>
    </location>
</feature>
<feature type="sequence conflict" description="In Ref. 1; AAF04627." evidence="7" ref="1">
    <original>L</original>
    <variation>V</variation>
    <location>
        <position position="624"/>
    </location>
</feature>
<feature type="sequence conflict" description="In Ref. 1; AAF04627." evidence="7" ref="1">
    <original>V</original>
    <variation>G</variation>
    <location>
        <position position="628"/>
    </location>
</feature>
<protein>
    <recommendedName>
        <fullName>Auxin response factor 10</fullName>
    </recommendedName>
</protein>
<gene>
    <name type="primary">ARF10</name>
    <name type="ordered locus">At2g28350</name>
    <name type="ORF">T1B3.13</name>
</gene>